<sequence length="156" mass="17172">MNLNATLIGQLIAFALFVWFCMKFVWPPIINAIETRQSQIANALASAEAAKKEQADTKNLVEQELSAAKVQAQEILDAANKRRNEVLDEVKAEAEELKAKIIAQGYAEVEAERKRVQEELRLKVASLAVAGAEKIVGRSIDEAANNDIIDKLVAEL</sequence>
<keyword id="KW-0066">ATP synthesis</keyword>
<keyword id="KW-0997">Cell inner membrane</keyword>
<keyword id="KW-1003">Cell membrane</keyword>
<keyword id="KW-0138">CF(0)</keyword>
<keyword id="KW-0375">Hydrogen ion transport</keyword>
<keyword id="KW-0406">Ion transport</keyword>
<keyword id="KW-0472">Membrane</keyword>
<keyword id="KW-0812">Transmembrane</keyword>
<keyword id="KW-1133">Transmembrane helix</keyword>
<keyword id="KW-0813">Transport</keyword>
<gene>
    <name evidence="1" type="primary">atpF</name>
    <name type="ordered locus">CGSHiGG_05670</name>
</gene>
<accession>A5UGZ3</accession>
<protein>
    <recommendedName>
        <fullName evidence="1">ATP synthase subunit b</fullName>
    </recommendedName>
    <alternativeName>
        <fullName evidence="1">ATP synthase F(0) sector subunit b</fullName>
    </alternativeName>
    <alternativeName>
        <fullName evidence="1">ATPase subunit I</fullName>
    </alternativeName>
    <alternativeName>
        <fullName evidence="1">F-type ATPase subunit b</fullName>
        <shortName evidence="1">F-ATPase subunit b</shortName>
    </alternativeName>
</protein>
<feature type="chain" id="PRO_0000368514" description="ATP synthase subunit b">
    <location>
        <begin position="1"/>
        <end position="156"/>
    </location>
</feature>
<feature type="transmembrane region" description="Helical" evidence="1">
    <location>
        <begin position="11"/>
        <end position="31"/>
    </location>
</feature>
<organism>
    <name type="scientific">Haemophilus influenzae (strain PittGG)</name>
    <dbReference type="NCBI Taxonomy" id="374931"/>
    <lineage>
        <taxon>Bacteria</taxon>
        <taxon>Pseudomonadati</taxon>
        <taxon>Pseudomonadota</taxon>
        <taxon>Gammaproteobacteria</taxon>
        <taxon>Pasteurellales</taxon>
        <taxon>Pasteurellaceae</taxon>
        <taxon>Haemophilus</taxon>
    </lineage>
</organism>
<comment type="function">
    <text evidence="1">F(1)F(0) ATP synthase produces ATP from ADP in the presence of a proton or sodium gradient. F-type ATPases consist of two structural domains, F(1) containing the extramembraneous catalytic core and F(0) containing the membrane proton channel, linked together by a central stalk and a peripheral stalk. During catalysis, ATP synthesis in the catalytic domain of F(1) is coupled via a rotary mechanism of the central stalk subunits to proton translocation.</text>
</comment>
<comment type="function">
    <text evidence="1">Component of the F(0) channel, it forms part of the peripheral stalk, linking F(1) to F(0).</text>
</comment>
<comment type="subunit">
    <text evidence="1">F-type ATPases have 2 components, F(1) - the catalytic core - and F(0) - the membrane proton channel. F(1) has five subunits: alpha(3), beta(3), gamma(1), delta(1), epsilon(1). F(0) has three main subunits: a(1), b(2) and c(10-14). The alpha and beta chains form an alternating ring which encloses part of the gamma chain. F(1) is attached to F(0) by a central stalk formed by the gamma and epsilon chains, while a peripheral stalk is formed by the delta and b chains.</text>
</comment>
<comment type="subcellular location">
    <subcellularLocation>
        <location evidence="1">Cell inner membrane</location>
        <topology evidence="1">Single-pass membrane protein</topology>
    </subcellularLocation>
</comment>
<comment type="similarity">
    <text evidence="1">Belongs to the ATPase B chain family.</text>
</comment>
<proteinExistence type="inferred from homology"/>
<reference key="1">
    <citation type="journal article" date="2007" name="Genome Biol.">
        <title>Characterization and modeling of the Haemophilus influenzae core and supragenomes based on the complete genomic sequences of Rd and 12 clinical nontypeable strains.</title>
        <authorList>
            <person name="Hogg J.S."/>
            <person name="Hu F.Z."/>
            <person name="Janto B."/>
            <person name="Boissy R."/>
            <person name="Hayes J."/>
            <person name="Keefe R."/>
            <person name="Post J.C."/>
            <person name="Ehrlich G.D."/>
        </authorList>
    </citation>
    <scope>NUCLEOTIDE SEQUENCE [LARGE SCALE GENOMIC DNA]</scope>
    <source>
        <strain>PittGG</strain>
    </source>
</reference>
<dbReference type="EMBL" id="CP000672">
    <property type="protein sequence ID" value="ABR00049.1"/>
    <property type="molecule type" value="Genomic_DNA"/>
</dbReference>
<dbReference type="SMR" id="A5UGZ3"/>
<dbReference type="KEGG" id="hiq:CGSHiGG_05670"/>
<dbReference type="HOGENOM" id="CLU_079215_4_5_6"/>
<dbReference type="Proteomes" id="UP000001990">
    <property type="component" value="Chromosome"/>
</dbReference>
<dbReference type="GO" id="GO:0005886">
    <property type="term" value="C:plasma membrane"/>
    <property type="evidence" value="ECO:0007669"/>
    <property type="project" value="UniProtKB-SubCell"/>
</dbReference>
<dbReference type="GO" id="GO:0045259">
    <property type="term" value="C:proton-transporting ATP synthase complex"/>
    <property type="evidence" value="ECO:0007669"/>
    <property type="project" value="UniProtKB-KW"/>
</dbReference>
<dbReference type="GO" id="GO:0046933">
    <property type="term" value="F:proton-transporting ATP synthase activity, rotational mechanism"/>
    <property type="evidence" value="ECO:0007669"/>
    <property type="project" value="UniProtKB-UniRule"/>
</dbReference>
<dbReference type="GO" id="GO:0046961">
    <property type="term" value="F:proton-transporting ATPase activity, rotational mechanism"/>
    <property type="evidence" value="ECO:0007669"/>
    <property type="project" value="TreeGrafter"/>
</dbReference>
<dbReference type="CDD" id="cd06503">
    <property type="entry name" value="ATP-synt_Fo_b"/>
    <property type="match status" value="1"/>
</dbReference>
<dbReference type="FunFam" id="1.20.5.620:FF:000001">
    <property type="entry name" value="ATP synthase subunit b"/>
    <property type="match status" value="1"/>
</dbReference>
<dbReference type="Gene3D" id="1.20.5.620">
    <property type="entry name" value="F1F0 ATP synthase subunit B, membrane domain"/>
    <property type="match status" value="1"/>
</dbReference>
<dbReference type="HAMAP" id="MF_01398">
    <property type="entry name" value="ATP_synth_b_bprime"/>
    <property type="match status" value="1"/>
</dbReference>
<dbReference type="InterPro" id="IPR028987">
    <property type="entry name" value="ATP_synth_B-like_membr_sf"/>
</dbReference>
<dbReference type="InterPro" id="IPR002146">
    <property type="entry name" value="ATP_synth_b/b'su_bac/chlpt"/>
</dbReference>
<dbReference type="InterPro" id="IPR005864">
    <property type="entry name" value="ATP_synth_F0_bsu_bac"/>
</dbReference>
<dbReference type="InterPro" id="IPR050059">
    <property type="entry name" value="ATP_synthase_B_chain"/>
</dbReference>
<dbReference type="NCBIfam" id="TIGR01144">
    <property type="entry name" value="ATP_synt_b"/>
    <property type="match status" value="1"/>
</dbReference>
<dbReference type="NCBIfam" id="NF004411">
    <property type="entry name" value="PRK05759.1-2"/>
    <property type="match status" value="1"/>
</dbReference>
<dbReference type="NCBIfam" id="NF004413">
    <property type="entry name" value="PRK05759.1-4"/>
    <property type="match status" value="1"/>
</dbReference>
<dbReference type="PANTHER" id="PTHR33445:SF1">
    <property type="entry name" value="ATP SYNTHASE SUBUNIT B"/>
    <property type="match status" value="1"/>
</dbReference>
<dbReference type="PANTHER" id="PTHR33445">
    <property type="entry name" value="ATP SYNTHASE SUBUNIT B', CHLOROPLASTIC"/>
    <property type="match status" value="1"/>
</dbReference>
<dbReference type="Pfam" id="PF00430">
    <property type="entry name" value="ATP-synt_B"/>
    <property type="match status" value="1"/>
</dbReference>
<dbReference type="SUPFAM" id="SSF81573">
    <property type="entry name" value="F1F0 ATP synthase subunit B, membrane domain"/>
    <property type="match status" value="1"/>
</dbReference>
<name>ATPF_HAEIG</name>
<evidence type="ECO:0000255" key="1">
    <source>
        <dbReference type="HAMAP-Rule" id="MF_01398"/>
    </source>
</evidence>